<gene>
    <name evidence="1" type="primary">yneA</name>
    <name type="ordered locus">BLi02033</name>
    <name type="ordered locus">BL05188</name>
</gene>
<feature type="chain" id="PRO_0000346638" description="Cell division suppressor protein YneA">
    <location>
        <begin position="1"/>
        <end position="103"/>
    </location>
</feature>
<feature type="domain" description="LysM" evidence="2">
    <location>
        <begin position="36"/>
        <end position="87"/>
    </location>
</feature>
<accession>Q65J41</accession>
<accession>Q62UJ8</accession>
<keyword id="KW-0131">Cell cycle</keyword>
<keyword id="KW-0132">Cell division</keyword>
<keyword id="KW-0963">Cytoplasm</keyword>
<keyword id="KW-0227">DNA damage</keyword>
<keyword id="KW-0234">DNA repair</keyword>
<keyword id="KW-1185">Reference proteome</keyword>
<keyword id="KW-0717">Septation</keyword>
<keyword id="KW-0742">SOS response</keyword>
<name>YNEA_BACLD</name>
<protein>
    <recommendedName>
        <fullName evidence="1">Cell division suppressor protein YneA</fullName>
    </recommendedName>
</protein>
<sequence length="103" mass="11636">MKKESLIFVSLFTAVISCCILFVSFAGKIEERKQYVKIEVQEGDTLWELADRIKGGKTADKHKFIEWVADKNNLPTSVIKPGDVLILPVAKQHSDQYQLAVVE</sequence>
<proteinExistence type="inferred from homology"/>
<comment type="function">
    <text evidence="1">Inhibits cell division during the SOS response. Affects a later stage of the cell division protein assembly, after the assembly of the Z ring, by probably suppressing recruitment of FtsL and/or DivIC to the division machinery.</text>
</comment>
<comment type="subcellular location">
    <subcellularLocation>
        <location evidence="1">Cytoplasm</location>
    </subcellularLocation>
</comment>
<comment type="similarity">
    <text evidence="1">Belongs to the YneA family.</text>
</comment>
<reference key="1">
    <citation type="journal article" date="2004" name="J. Mol. Microbiol. Biotechnol.">
        <title>The complete genome sequence of Bacillus licheniformis DSM13, an organism with great industrial potential.</title>
        <authorList>
            <person name="Veith B."/>
            <person name="Herzberg C."/>
            <person name="Steckel S."/>
            <person name="Feesche J."/>
            <person name="Maurer K.H."/>
            <person name="Ehrenreich P."/>
            <person name="Baeumer S."/>
            <person name="Henne A."/>
            <person name="Liesegang H."/>
            <person name="Merkl R."/>
            <person name="Ehrenreich A."/>
            <person name="Gottschalk G."/>
        </authorList>
    </citation>
    <scope>NUCLEOTIDE SEQUENCE [LARGE SCALE GENOMIC DNA]</scope>
    <source>
        <strain>ATCC 14580 / DSM 13 / JCM 2505 / CCUG 7422 / NBRC 12200 / NCIMB 9375 / NCTC 10341 / NRRL NRS-1264 / Gibson 46</strain>
    </source>
</reference>
<reference key="2">
    <citation type="journal article" date="2004" name="Genome Biol.">
        <title>Complete genome sequence of the industrial bacterium Bacillus licheniformis and comparisons with closely related Bacillus species.</title>
        <authorList>
            <person name="Rey M.W."/>
            <person name="Ramaiya P."/>
            <person name="Nelson B.A."/>
            <person name="Brody-Karpin S.D."/>
            <person name="Zaretsky E.J."/>
            <person name="Tang M."/>
            <person name="Lopez de Leon A."/>
            <person name="Xiang H."/>
            <person name="Gusti V."/>
            <person name="Clausen I.G."/>
            <person name="Olsen P.B."/>
            <person name="Rasmussen M.D."/>
            <person name="Andersen J.T."/>
            <person name="Joergensen P.L."/>
            <person name="Larsen T.S."/>
            <person name="Sorokin A."/>
            <person name="Bolotin A."/>
            <person name="Lapidus A."/>
            <person name="Galleron N."/>
            <person name="Ehrlich S.D."/>
            <person name="Berka R.M."/>
        </authorList>
    </citation>
    <scope>NUCLEOTIDE SEQUENCE [LARGE SCALE GENOMIC DNA]</scope>
    <source>
        <strain>ATCC 14580 / DSM 13 / JCM 2505 / CCUG 7422 / NBRC 12200 / NCIMB 9375 / NCTC 10341 / NRRL NRS-1264 / Gibson 46</strain>
    </source>
</reference>
<organism>
    <name type="scientific">Bacillus licheniformis (strain ATCC 14580 / DSM 13 / JCM 2505 / CCUG 7422 / NBRC 12200 / NCIMB 9375 / NCTC 10341 / NRRL NRS-1264 / Gibson 46)</name>
    <dbReference type="NCBI Taxonomy" id="279010"/>
    <lineage>
        <taxon>Bacteria</taxon>
        <taxon>Bacillati</taxon>
        <taxon>Bacillota</taxon>
        <taxon>Bacilli</taxon>
        <taxon>Bacillales</taxon>
        <taxon>Bacillaceae</taxon>
        <taxon>Bacillus</taxon>
    </lineage>
</organism>
<dbReference type="EMBL" id="CP000002">
    <property type="protein sequence ID" value="AAU23561.1"/>
    <property type="molecule type" value="Genomic_DNA"/>
</dbReference>
<dbReference type="EMBL" id="AE017333">
    <property type="protein sequence ID" value="AAU40923.1"/>
    <property type="molecule type" value="Genomic_DNA"/>
</dbReference>
<dbReference type="RefSeq" id="WP_003182225.1">
    <property type="nucleotide sequence ID" value="NC_006322.1"/>
</dbReference>
<dbReference type="SMR" id="Q65J41"/>
<dbReference type="STRING" id="279010.BL05188"/>
<dbReference type="GeneID" id="92861376"/>
<dbReference type="KEGG" id="bld:BLi02033"/>
<dbReference type="KEGG" id="bli:BL05188"/>
<dbReference type="eggNOG" id="COG1388">
    <property type="taxonomic scope" value="Bacteria"/>
</dbReference>
<dbReference type="HOGENOM" id="CLU_136034_4_0_9"/>
<dbReference type="Proteomes" id="UP000000606">
    <property type="component" value="Chromosome"/>
</dbReference>
<dbReference type="GO" id="GO:0005737">
    <property type="term" value="C:cytoplasm"/>
    <property type="evidence" value="ECO:0007669"/>
    <property type="project" value="UniProtKB-SubCell"/>
</dbReference>
<dbReference type="GO" id="GO:0000917">
    <property type="term" value="P:division septum assembly"/>
    <property type="evidence" value="ECO:0007669"/>
    <property type="project" value="UniProtKB-KW"/>
</dbReference>
<dbReference type="GO" id="GO:0006281">
    <property type="term" value="P:DNA repair"/>
    <property type="evidence" value="ECO:0007669"/>
    <property type="project" value="UniProtKB-KW"/>
</dbReference>
<dbReference type="GO" id="GO:0051782">
    <property type="term" value="P:negative regulation of cell division"/>
    <property type="evidence" value="ECO:0007669"/>
    <property type="project" value="UniProtKB-UniRule"/>
</dbReference>
<dbReference type="GO" id="GO:0009432">
    <property type="term" value="P:SOS response"/>
    <property type="evidence" value="ECO:0007669"/>
    <property type="project" value="UniProtKB-UniRule"/>
</dbReference>
<dbReference type="CDD" id="cd00118">
    <property type="entry name" value="LysM"/>
    <property type="match status" value="1"/>
</dbReference>
<dbReference type="Gene3D" id="3.10.350.10">
    <property type="entry name" value="LysM domain"/>
    <property type="match status" value="1"/>
</dbReference>
<dbReference type="HAMAP" id="MF_02014">
    <property type="entry name" value="YneA"/>
    <property type="match status" value="1"/>
</dbReference>
<dbReference type="InterPro" id="IPR022887">
    <property type="entry name" value="Cell_div_suppressor_YneA"/>
</dbReference>
<dbReference type="InterPro" id="IPR018392">
    <property type="entry name" value="LysM_dom"/>
</dbReference>
<dbReference type="InterPro" id="IPR036779">
    <property type="entry name" value="LysM_dom_sf"/>
</dbReference>
<dbReference type="NCBIfam" id="NF010723">
    <property type="entry name" value="PRK14125.1"/>
    <property type="match status" value="1"/>
</dbReference>
<dbReference type="Pfam" id="PF01476">
    <property type="entry name" value="LysM"/>
    <property type="match status" value="1"/>
</dbReference>
<dbReference type="SMART" id="SM00257">
    <property type="entry name" value="LysM"/>
    <property type="match status" value="1"/>
</dbReference>
<dbReference type="PROSITE" id="PS51782">
    <property type="entry name" value="LYSM"/>
    <property type="match status" value="1"/>
</dbReference>
<evidence type="ECO:0000255" key="1">
    <source>
        <dbReference type="HAMAP-Rule" id="MF_02014"/>
    </source>
</evidence>
<evidence type="ECO:0000255" key="2">
    <source>
        <dbReference type="PROSITE-ProRule" id="PRU01118"/>
    </source>
</evidence>